<protein>
    <recommendedName>
        <fullName>Serpentine receptor class epsilon-30</fullName>
        <shortName>Protein sre-30</shortName>
    </recommendedName>
</protein>
<proteinExistence type="inferred from homology"/>
<feature type="chain" id="PRO_0000104544" description="Serpentine receptor class epsilon-30">
    <location>
        <begin position="1"/>
        <end position="357"/>
    </location>
</feature>
<feature type="transmembrane region" description="Helical" evidence="1">
    <location>
        <begin position="31"/>
        <end position="51"/>
    </location>
</feature>
<feature type="transmembrane region" description="Helical" evidence="1">
    <location>
        <begin position="61"/>
        <end position="81"/>
    </location>
</feature>
<feature type="transmembrane region" description="Helical" evidence="1">
    <location>
        <begin position="121"/>
        <end position="141"/>
    </location>
</feature>
<feature type="transmembrane region" description="Helical" evidence="1">
    <location>
        <begin position="165"/>
        <end position="185"/>
    </location>
</feature>
<feature type="transmembrane region" description="Helical" evidence="1">
    <location>
        <begin position="192"/>
        <end position="212"/>
    </location>
</feature>
<feature type="transmembrane region" description="Helical" evidence="1">
    <location>
        <begin position="253"/>
        <end position="273"/>
    </location>
</feature>
<feature type="transmembrane region" description="Helical" evidence="1">
    <location>
        <begin position="283"/>
        <end position="303"/>
    </location>
</feature>
<dbReference type="EMBL" id="Z83231">
    <property type="protein sequence ID" value="CAB05750.1"/>
    <property type="molecule type" value="Genomic_DNA"/>
</dbReference>
<dbReference type="PIR" id="T22880">
    <property type="entry name" value="T22880"/>
</dbReference>
<dbReference type="RefSeq" id="NP_496632.1">
    <property type="nucleotide sequence ID" value="NM_064231.3"/>
</dbReference>
<dbReference type="SMR" id="O62267"/>
<dbReference type="FunCoup" id="O62267">
    <property type="interactions" value="9"/>
</dbReference>
<dbReference type="STRING" id="6239.F57G9.2.1"/>
<dbReference type="PaxDb" id="6239-F57G9.2"/>
<dbReference type="EnsemblMetazoa" id="F57G9.2.1">
    <property type="protein sequence ID" value="F57G9.2.1"/>
    <property type="gene ID" value="WBGene00010218"/>
</dbReference>
<dbReference type="GeneID" id="186476"/>
<dbReference type="KEGG" id="cel:CELE_F57G9.2"/>
<dbReference type="UCSC" id="F57G9.2">
    <property type="organism name" value="c. elegans"/>
</dbReference>
<dbReference type="AGR" id="WB:WBGene00010218"/>
<dbReference type="CTD" id="186476"/>
<dbReference type="WormBase" id="F57G9.2">
    <property type="protein sequence ID" value="CE17918"/>
    <property type="gene ID" value="WBGene00010218"/>
    <property type="gene designation" value="sre-30"/>
</dbReference>
<dbReference type="eggNOG" id="ENOG502TFCH">
    <property type="taxonomic scope" value="Eukaryota"/>
</dbReference>
<dbReference type="GeneTree" id="ENSGT01130000278788"/>
<dbReference type="HOGENOM" id="CLU_063305_1_0_1"/>
<dbReference type="InParanoid" id="O62267"/>
<dbReference type="PhylomeDB" id="O62267"/>
<dbReference type="PRO" id="PR:O62267"/>
<dbReference type="Proteomes" id="UP000001940">
    <property type="component" value="Chromosome II"/>
</dbReference>
<dbReference type="GO" id="GO:0016020">
    <property type="term" value="C:membrane"/>
    <property type="evidence" value="ECO:0007669"/>
    <property type="project" value="UniProtKB-SubCell"/>
</dbReference>
<dbReference type="GO" id="GO:0007606">
    <property type="term" value="P:sensory perception of chemical stimulus"/>
    <property type="evidence" value="ECO:0007669"/>
    <property type="project" value="InterPro"/>
</dbReference>
<dbReference type="InterPro" id="IPR004151">
    <property type="entry name" value="7TM_GPCR_serpentine_rcpt_Sre"/>
</dbReference>
<dbReference type="PANTHER" id="PTHR23128">
    <property type="entry name" value="SERPENTINE RECEPTOR, CLASS E (EPSILON)-RELATED"/>
    <property type="match status" value="1"/>
</dbReference>
<dbReference type="PANTHER" id="PTHR23128:SF60">
    <property type="entry name" value="SERPENTINE RECEPTOR, CLASS E (EPSILON)-RELATED"/>
    <property type="match status" value="1"/>
</dbReference>
<dbReference type="Pfam" id="PF03125">
    <property type="entry name" value="Sre"/>
    <property type="match status" value="1"/>
</dbReference>
<organism>
    <name type="scientific">Caenorhabditis elegans</name>
    <dbReference type="NCBI Taxonomy" id="6239"/>
    <lineage>
        <taxon>Eukaryota</taxon>
        <taxon>Metazoa</taxon>
        <taxon>Ecdysozoa</taxon>
        <taxon>Nematoda</taxon>
        <taxon>Chromadorea</taxon>
        <taxon>Rhabditida</taxon>
        <taxon>Rhabditina</taxon>
        <taxon>Rhabditomorpha</taxon>
        <taxon>Rhabditoidea</taxon>
        <taxon>Rhabditidae</taxon>
        <taxon>Peloderinae</taxon>
        <taxon>Caenorhabditis</taxon>
    </lineage>
</organism>
<sequence length="357" mass="40783">MIIHISNSSSYIWLSVYFYKEPLSLKLLISIFELSSCILCGYILNLSIFVMLKIQLFHKNLMFLTVPLFAIWHELIIGKFITIAYRLKIVNPGFELGEHTVFWTNDPDKTLEVAGSSGLELLIFGGFLQWHTIYSIVFGILAVATERTIASVYIKDYESKERIYIPIILTIISQLLSISISLAIITQSIGPFLARLPFVICAPLSVLVFLFIKHTNQSLLKEICNPKRTRIFTVSQQCQVKENLRALRLGTRLVVVVIFYISICGFGIAALTFGLIPAGFGHLIENFLFLHPYPICLTAMFSIPQWRDQFKKSILPFLNRRLAKIEQVVTVRIEVNVQNSSSVETDIYFRQLTESWT</sequence>
<comment type="subcellular location">
    <subcellularLocation>
        <location evidence="2">Membrane</location>
        <topology evidence="2">Multi-pass membrane protein</topology>
    </subcellularLocation>
</comment>
<comment type="similarity">
    <text evidence="2">Belongs to the nematode receptor-like protein sre family.</text>
</comment>
<keyword id="KW-0472">Membrane</keyword>
<keyword id="KW-1185">Reference proteome</keyword>
<keyword id="KW-0812">Transmembrane</keyword>
<keyword id="KW-1133">Transmembrane helix</keyword>
<gene>
    <name type="primary">sre-30</name>
    <name type="ORF">F57G9.2</name>
</gene>
<accession>O62267</accession>
<reference key="1">
    <citation type="journal article" date="1998" name="Science">
        <title>Genome sequence of the nematode C. elegans: a platform for investigating biology.</title>
        <authorList>
            <consortium name="The C. elegans sequencing consortium"/>
        </authorList>
    </citation>
    <scope>NUCLEOTIDE SEQUENCE [LARGE SCALE GENOMIC DNA]</scope>
    <source>
        <strain>Bristol N2</strain>
    </source>
</reference>
<evidence type="ECO:0000255" key="1"/>
<evidence type="ECO:0000305" key="2"/>
<name>SRE30_CAEEL</name>